<dbReference type="EC" id="7.1.2.2"/>
<dbReference type="EMBL" id="AL590346">
    <property type="protein sequence ID" value="CAC35874.1"/>
    <property type="molecule type" value="Genomic_DNA"/>
</dbReference>
<dbReference type="EMBL" id="CP002688">
    <property type="protein sequence ID" value="AED91338.1"/>
    <property type="molecule type" value="Genomic_DNA"/>
</dbReference>
<dbReference type="EMBL" id="AY050995">
    <property type="protein sequence ID" value="AAK93672.1"/>
    <property type="molecule type" value="mRNA"/>
</dbReference>
<dbReference type="EMBL" id="AY079341">
    <property type="protein sequence ID" value="AAL85072.1"/>
    <property type="molecule type" value="mRNA"/>
</dbReference>
<dbReference type="EMBL" id="AY113847">
    <property type="protein sequence ID" value="AAM44896.1"/>
    <property type="molecule type" value="mRNA"/>
</dbReference>
<dbReference type="RefSeq" id="NP_568204.1">
    <property type="nucleotide sequence ID" value="NM_120954.3"/>
</dbReference>
<dbReference type="SMR" id="P83484"/>
<dbReference type="BioGRID" id="16048">
    <property type="interactions" value="5"/>
</dbReference>
<dbReference type="FunCoup" id="P83484">
    <property type="interactions" value="2225"/>
</dbReference>
<dbReference type="IntAct" id="P83484">
    <property type="interactions" value="1"/>
</dbReference>
<dbReference type="STRING" id="3702.P83484"/>
<dbReference type="iPTMnet" id="P83484"/>
<dbReference type="PaxDb" id="3702-AT5G08690.1"/>
<dbReference type="ProteomicsDB" id="241073"/>
<dbReference type="EnsemblPlants" id="AT5G08690.1">
    <property type="protein sequence ID" value="AT5G08690.1"/>
    <property type="gene ID" value="AT5G08690"/>
</dbReference>
<dbReference type="GeneID" id="830770"/>
<dbReference type="Gramene" id="AT5G08690.1">
    <property type="protein sequence ID" value="AT5G08690.1"/>
    <property type="gene ID" value="AT5G08690"/>
</dbReference>
<dbReference type="KEGG" id="ath:AT5G08690"/>
<dbReference type="Araport" id="AT5G08690"/>
<dbReference type="TAIR" id="AT5G08690"/>
<dbReference type="eggNOG" id="KOG1350">
    <property type="taxonomic scope" value="Eukaryota"/>
</dbReference>
<dbReference type="HOGENOM" id="CLU_022398_0_2_1"/>
<dbReference type="InParanoid" id="P83484"/>
<dbReference type="OMA" id="DTQSPIM"/>
<dbReference type="OrthoDB" id="1069748at2759"/>
<dbReference type="PhylomeDB" id="P83484"/>
<dbReference type="BioCyc" id="ARA:AT5G08690-MONOMER"/>
<dbReference type="CD-CODE" id="4299E36E">
    <property type="entry name" value="Nucleolus"/>
</dbReference>
<dbReference type="PRO" id="PR:P83484"/>
<dbReference type="Proteomes" id="UP000006548">
    <property type="component" value="Chromosome 5"/>
</dbReference>
<dbReference type="ExpressionAtlas" id="P83484">
    <property type="expression patterns" value="baseline and differential"/>
</dbReference>
<dbReference type="GO" id="GO:0009941">
    <property type="term" value="C:chloroplast envelope"/>
    <property type="evidence" value="ECO:0007005"/>
    <property type="project" value="TAIR"/>
</dbReference>
<dbReference type="GO" id="GO:0005743">
    <property type="term" value="C:mitochondrial inner membrane"/>
    <property type="evidence" value="ECO:0007669"/>
    <property type="project" value="UniProtKB-SubCell"/>
</dbReference>
<dbReference type="GO" id="GO:0005739">
    <property type="term" value="C:mitochondrion"/>
    <property type="evidence" value="ECO:0000314"/>
    <property type="project" value="TAIR"/>
</dbReference>
<dbReference type="GO" id="GO:0005730">
    <property type="term" value="C:nucleolus"/>
    <property type="evidence" value="ECO:0007005"/>
    <property type="project" value="TAIR"/>
</dbReference>
<dbReference type="GO" id="GO:0005886">
    <property type="term" value="C:plasma membrane"/>
    <property type="evidence" value="ECO:0007005"/>
    <property type="project" value="TAIR"/>
</dbReference>
<dbReference type="GO" id="GO:0045259">
    <property type="term" value="C:proton-transporting ATP synthase complex"/>
    <property type="evidence" value="ECO:0007669"/>
    <property type="project" value="UniProtKB-KW"/>
</dbReference>
<dbReference type="GO" id="GO:0005524">
    <property type="term" value="F:ATP binding"/>
    <property type="evidence" value="ECO:0007669"/>
    <property type="project" value="UniProtKB-KW"/>
</dbReference>
<dbReference type="GO" id="GO:0016887">
    <property type="term" value="F:ATP hydrolysis activity"/>
    <property type="evidence" value="ECO:0007669"/>
    <property type="project" value="InterPro"/>
</dbReference>
<dbReference type="GO" id="GO:0005507">
    <property type="term" value="F:copper ion binding"/>
    <property type="evidence" value="ECO:0007005"/>
    <property type="project" value="TAIR"/>
</dbReference>
<dbReference type="GO" id="GO:0008266">
    <property type="term" value="F:poly(U) RNA binding"/>
    <property type="evidence" value="ECO:0000314"/>
    <property type="project" value="TAIR"/>
</dbReference>
<dbReference type="GO" id="GO:0046933">
    <property type="term" value="F:proton-transporting ATP synthase activity, rotational mechanism"/>
    <property type="evidence" value="ECO:0007669"/>
    <property type="project" value="InterPro"/>
</dbReference>
<dbReference type="CDD" id="cd18110">
    <property type="entry name" value="ATP-synt_F1_beta_C"/>
    <property type="match status" value="1"/>
</dbReference>
<dbReference type="CDD" id="cd18115">
    <property type="entry name" value="ATP-synt_F1_beta_N"/>
    <property type="match status" value="1"/>
</dbReference>
<dbReference type="CDD" id="cd01133">
    <property type="entry name" value="F1-ATPase_beta_CD"/>
    <property type="match status" value="1"/>
</dbReference>
<dbReference type="FunFam" id="1.10.1140.10:FF:000001">
    <property type="entry name" value="ATP synthase subunit beta"/>
    <property type="match status" value="1"/>
</dbReference>
<dbReference type="FunFam" id="2.40.10.170:FF:000006">
    <property type="entry name" value="ATP synthase subunit beta"/>
    <property type="match status" value="1"/>
</dbReference>
<dbReference type="FunFam" id="3.40.50.12240:FF:000006">
    <property type="entry name" value="ATP synthase subunit beta"/>
    <property type="match status" value="1"/>
</dbReference>
<dbReference type="FunFam" id="3.40.50.300:FF:000026">
    <property type="entry name" value="ATP synthase subunit beta"/>
    <property type="match status" value="1"/>
</dbReference>
<dbReference type="Gene3D" id="2.40.10.170">
    <property type="match status" value="1"/>
</dbReference>
<dbReference type="Gene3D" id="1.10.10.910">
    <property type="entry name" value="ATP synthase, F1 beta subunit"/>
    <property type="match status" value="1"/>
</dbReference>
<dbReference type="Gene3D" id="1.10.1140.10">
    <property type="entry name" value="Bovine Mitochondrial F1-atpase, Atp Synthase Beta Chain, Chain D, domain 3"/>
    <property type="match status" value="1"/>
</dbReference>
<dbReference type="Gene3D" id="3.40.50.300">
    <property type="entry name" value="P-loop containing nucleotide triphosphate hydrolases"/>
    <property type="match status" value="1"/>
</dbReference>
<dbReference type="HAMAP" id="MF_01347">
    <property type="entry name" value="ATP_synth_beta_bact"/>
    <property type="match status" value="1"/>
</dbReference>
<dbReference type="InterPro" id="IPR003593">
    <property type="entry name" value="AAA+_ATPase"/>
</dbReference>
<dbReference type="InterPro" id="IPR055190">
    <property type="entry name" value="ATP-synt_VA_C"/>
</dbReference>
<dbReference type="InterPro" id="IPR042079">
    <property type="entry name" value="ATP_synt_F1_beta_sf"/>
</dbReference>
<dbReference type="InterPro" id="IPR020971">
    <property type="entry name" value="ATP_synth_F1_beta_su"/>
</dbReference>
<dbReference type="InterPro" id="IPR005722">
    <property type="entry name" value="ATP_synth_F1_bsu"/>
</dbReference>
<dbReference type="InterPro" id="IPR020003">
    <property type="entry name" value="ATPase_a/bsu_AS"/>
</dbReference>
<dbReference type="InterPro" id="IPR050053">
    <property type="entry name" value="ATPase_alpha/beta_chains"/>
</dbReference>
<dbReference type="InterPro" id="IPR004100">
    <property type="entry name" value="ATPase_F1/V1/A1_a/bsu_N"/>
</dbReference>
<dbReference type="InterPro" id="IPR036121">
    <property type="entry name" value="ATPase_F1/V1/A1_a/bsu_N_sf"/>
</dbReference>
<dbReference type="InterPro" id="IPR000194">
    <property type="entry name" value="ATPase_F1/V1/A1_a/bsu_nucl-bd"/>
</dbReference>
<dbReference type="InterPro" id="IPR024034">
    <property type="entry name" value="ATPase_F1/V1_b/a_C"/>
</dbReference>
<dbReference type="InterPro" id="IPR027417">
    <property type="entry name" value="P-loop_NTPase"/>
</dbReference>
<dbReference type="NCBIfam" id="TIGR01039">
    <property type="entry name" value="atpD"/>
    <property type="match status" value="1"/>
</dbReference>
<dbReference type="PANTHER" id="PTHR15184">
    <property type="entry name" value="ATP SYNTHASE"/>
    <property type="match status" value="1"/>
</dbReference>
<dbReference type="PANTHER" id="PTHR15184:SF80">
    <property type="entry name" value="ATP SYNTHASE SUBUNIT BETA-1, MITOCHONDRIAL-RELATED"/>
    <property type="match status" value="1"/>
</dbReference>
<dbReference type="Pfam" id="PF00006">
    <property type="entry name" value="ATP-synt_ab"/>
    <property type="match status" value="1"/>
</dbReference>
<dbReference type="Pfam" id="PF02874">
    <property type="entry name" value="ATP-synt_ab_N"/>
    <property type="match status" value="1"/>
</dbReference>
<dbReference type="Pfam" id="PF22919">
    <property type="entry name" value="ATP-synt_VA_C"/>
    <property type="match status" value="1"/>
</dbReference>
<dbReference type="Pfam" id="PF11421">
    <property type="entry name" value="Synthase_beta"/>
    <property type="match status" value="1"/>
</dbReference>
<dbReference type="PIRSF" id="PIRSF039072">
    <property type="entry name" value="ATPase_subunit_beta"/>
    <property type="match status" value="1"/>
</dbReference>
<dbReference type="SMART" id="SM00382">
    <property type="entry name" value="AAA"/>
    <property type="match status" value="1"/>
</dbReference>
<dbReference type="SUPFAM" id="SSF47917">
    <property type="entry name" value="C-terminal domain of alpha and beta subunits of F1 ATP synthase"/>
    <property type="match status" value="1"/>
</dbReference>
<dbReference type="SUPFAM" id="SSF50615">
    <property type="entry name" value="N-terminal domain of alpha and beta subunits of F1 ATP synthase"/>
    <property type="match status" value="1"/>
</dbReference>
<dbReference type="SUPFAM" id="SSF52540">
    <property type="entry name" value="P-loop containing nucleoside triphosphate hydrolases"/>
    <property type="match status" value="1"/>
</dbReference>
<dbReference type="PROSITE" id="PS00152">
    <property type="entry name" value="ATPASE_ALPHA_BETA"/>
    <property type="match status" value="1"/>
</dbReference>
<organism evidence="9">
    <name type="scientific">Arabidopsis thaliana</name>
    <name type="common">Mouse-ear cress</name>
    <dbReference type="NCBI Taxonomy" id="3702"/>
    <lineage>
        <taxon>Eukaryota</taxon>
        <taxon>Viridiplantae</taxon>
        <taxon>Streptophyta</taxon>
        <taxon>Embryophyta</taxon>
        <taxon>Tracheophyta</taxon>
        <taxon>Spermatophyta</taxon>
        <taxon>Magnoliopsida</taxon>
        <taxon>eudicotyledons</taxon>
        <taxon>Gunneridae</taxon>
        <taxon>Pentapetalae</taxon>
        <taxon>rosids</taxon>
        <taxon>malvids</taxon>
        <taxon>Brassicales</taxon>
        <taxon>Brassicaceae</taxon>
        <taxon>Camelineae</taxon>
        <taxon>Arabidopsis</taxon>
    </lineage>
</organism>
<reference evidence="7" key="1">
    <citation type="journal article" date="2000" name="Nature">
        <title>Sequence and analysis of chromosome 5 of the plant Arabidopsis thaliana.</title>
        <authorList>
            <person name="Tabata S."/>
            <person name="Kaneko T."/>
            <person name="Nakamura Y."/>
            <person name="Kotani H."/>
            <person name="Kato T."/>
            <person name="Asamizu E."/>
            <person name="Miyajima N."/>
            <person name="Sasamoto S."/>
            <person name="Kimura T."/>
            <person name="Hosouchi T."/>
            <person name="Kawashima K."/>
            <person name="Kohara M."/>
            <person name="Matsumoto M."/>
            <person name="Matsuno A."/>
            <person name="Muraki A."/>
            <person name="Nakayama S."/>
            <person name="Nakazaki N."/>
            <person name="Naruo K."/>
            <person name="Okumura S."/>
            <person name="Shinpo S."/>
            <person name="Takeuchi C."/>
            <person name="Wada T."/>
            <person name="Watanabe A."/>
            <person name="Yamada M."/>
            <person name="Yasuda M."/>
            <person name="Sato S."/>
            <person name="de la Bastide M."/>
            <person name="Huang E."/>
            <person name="Spiegel L."/>
            <person name="Gnoj L."/>
            <person name="O'Shaughnessy A."/>
            <person name="Preston R."/>
            <person name="Habermann K."/>
            <person name="Murray J."/>
            <person name="Johnson D."/>
            <person name="Rohlfing T."/>
            <person name="Nelson J."/>
            <person name="Stoneking T."/>
            <person name="Pepin K."/>
            <person name="Spieth J."/>
            <person name="Sekhon M."/>
            <person name="Armstrong J."/>
            <person name="Becker M."/>
            <person name="Belter E."/>
            <person name="Cordum H."/>
            <person name="Cordes M."/>
            <person name="Courtney L."/>
            <person name="Courtney W."/>
            <person name="Dante M."/>
            <person name="Du H."/>
            <person name="Edwards J."/>
            <person name="Fryman J."/>
            <person name="Haakensen B."/>
            <person name="Lamar E."/>
            <person name="Latreille P."/>
            <person name="Leonard S."/>
            <person name="Meyer R."/>
            <person name="Mulvaney E."/>
            <person name="Ozersky P."/>
            <person name="Riley A."/>
            <person name="Strowmatt C."/>
            <person name="Wagner-McPherson C."/>
            <person name="Wollam A."/>
            <person name="Yoakum M."/>
            <person name="Bell M."/>
            <person name="Dedhia N."/>
            <person name="Parnell L."/>
            <person name="Shah R."/>
            <person name="Rodriguez M."/>
            <person name="Hoon See L."/>
            <person name="Vil D."/>
            <person name="Baker J."/>
            <person name="Kirchoff K."/>
            <person name="Toth K."/>
            <person name="King L."/>
            <person name="Bahret A."/>
            <person name="Miller B."/>
            <person name="Marra M.A."/>
            <person name="Martienssen R."/>
            <person name="McCombie W.R."/>
            <person name="Wilson R.K."/>
            <person name="Murphy G."/>
            <person name="Bancroft I."/>
            <person name="Volckaert G."/>
            <person name="Wambutt R."/>
            <person name="Duesterhoeft A."/>
            <person name="Stiekema W."/>
            <person name="Pohl T."/>
            <person name="Entian K.-D."/>
            <person name="Terryn N."/>
            <person name="Hartley N."/>
            <person name="Bent E."/>
            <person name="Johnson S."/>
            <person name="Langham S.-A."/>
            <person name="McCullagh B."/>
            <person name="Robben J."/>
            <person name="Grymonprez B."/>
            <person name="Zimmermann W."/>
            <person name="Ramsperger U."/>
            <person name="Wedler H."/>
            <person name="Balke K."/>
            <person name="Wedler E."/>
            <person name="Peters S."/>
            <person name="van Staveren M."/>
            <person name="Dirkse W."/>
            <person name="Mooijman P."/>
            <person name="Klein Lankhorst R."/>
            <person name="Weitzenegger T."/>
            <person name="Bothe G."/>
            <person name="Rose M."/>
            <person name="Hauf J."/>
            <person name="Berneiser S."/>
            <person name="Hempel S."/>
            <person name="Feldpausch M."/>
            <person name="Lamberth S."/>
            <person name="Villarroel R."/>
            <person name="Gielen J."/>
            <person name="Ardiles W."/>
            <person name="Bents O."/>
            <person name="Lemcke K."/>
            <person name="Kolesov G."/>
            <person name="Mayer K.F.X."/>
            <person name="Rudd S."/>
            <person name="Schoof H."/>
            <person name="Schueller C."/>
            <person name="Zaccaria P."/>
            <person name="Mewes H.-W."/>
            <person name="Bevan M."/>
            <person name="Fransz P.F."/>
        </authorList>
    </citation>
    <scope>NUCLEOTIDE SEQUENCE [LARGE SCALE GENOMIC DNA]</scope>
    <source>
        <strain>cv. Columbia</strain>
    </source>
</reference>
<reference evidence="7 8" key="2">
    <citation type="journal article" date="2017" name="Plant J.">
        <title>Araport11: a complete reannotation of the Arabidopsis thaliana reference genome.</title>
        <authorList>
            <person name="Cheng C.Y."/>
            <person name="Krishnakumar V."/>
            <person name="Chan A.P."/>
            <person name="Thibaud-Nissen F."/>
            <person name="Schobel S."/>
            <person name="Town C.D."/>
        </authorList>
    </citation>
    <scope>GENOME REANNOTATION</scope>
    <source>
        <strain>cv. Columbia</strain>
    </source>
</reference>
<reference key="3">
    <citation type="journal article" date="2003" name="Science">
        <title>Empirical analysis of transcriptional activity in the Arabidopsis genome.</title>
        <authorList>
            <person name="Yamada K."/>
            <person name="Lim J."/>
            <person name="Dale J.M."/>
            <person name="Chen H."/>
            <person name="Shinn P."/>
            <person name="Palm C.J."/>
            <person name="Southwick A.M."/>
            <person name="Wu H.C."/>
            <person name="Kim C.J."/>
            <person name="Nguyen M."/>
            <person name="Pham P.K."/>
            <person name="Cheuk R.F."/>
            <person name="Karlin-Newmann G."/>
            <person name="Liu S.X."/>
            <person name="Lam B."/>
            <person name="Sakano H."/>
            <person name="Wu T."/>
            <person name="Yu G."/>
            <person name="Miranda M."/>
            <person name="Quach H.L."/>
            <person name="Tripp M."/>
            <person name="Chang C.H."/>
            <person name="Lee J.M."/>
            <person name="Toriumi M.J."/>
            <person name="Chan M.M."/>
            <person name="Tang C.C."/>
            <person name="Onodera C.S."/>
            <person name="Deng J.M."/>
            <person name="Akiyama K."/>
            <person name="Ansari Y."/>
            <person name="Arakawa T."/>
            <person name="Banh J."/>
            <person name="Banno F."/>
            <person name="Bowser L."/>
            <person name="Brooks S.Y."/>
            <person name="Carninci P."/>
            <person name="Chao Q."/>
            <person name="Choy N."/>
            <person name="Enju A."/>
            <person name="Goldsmith A.D."/>
            <person name="Gurjal M."/>
            <person name="Hansen N.F."/>
            <person name="Hayashizaki Y."/>
            <person name="Johnson-Hopson C."/>
            <person name="Hsuan V.W."/>
            <person name="Iida K."/>
            <person name="Karnes M."/>
            <person name="Khan S."/>
            <person name="Koesema E."/>
            <person name="Ishida J."/>
            <person name="Jiang P.X."/>
            <person name="Jones T."/>
            <person name="Kawai J."/>
            <person name="Kamiya A."/>
            <person name="Meyers C."/>
            <person name="Nakajima M."/>
            <person name="Narusaka M."/>
            <person name="Seki M."/>
            <person name="Sakurai T."/>
            <person name="Satou M."/>
            <person name="Tamse R."/>
            <person name="Vaysberg M."/>
            <person name="Wallender E.K."/>
            <person name="Wong C."/>
            <person name="Yamamura Y."/>
            <person name="Yuan S."/>
            <person name="Shinozaki K."/>
            <person name="Davis R.W."/>
            <person name="Theologis A."/>
            <person name="Ecker J.R."/>
        </authorList>
    </citation>
    <scope>NUCLEOTIDE SEQUENCE [LARGE SCALE MRNA]</scope>
    <source>
        <strain>cv. Columbia</strain>
    </source>
</reference>
<reference evidence="7" key="4">
    <citation type="journal article" date="2001" name="Plant Physiol.">
        <title>Proteomic approach to identify novel mitochondrial proteins in Arabidopsis.</title>
        <authorList>
            <person name="Kruft V."/>
            <person name="Eubel H."/>
            <person name="Jaensch L."/>
            <person name="Werhahn W."/>
            <person name="Braun H.-P."/>
        </authorList>
    </citation>
    <scope>PROTEIN SEQUENCE OF 52-66</scope>
    <scope>SUBCELLULAR LOCATION</scope>
    <source>
        <tissue>Leaf</tissue>
        <tissue>Stem</tissue>
    </source>
</reference>
<reference key="5">
    <citation type="journal article" date="2004" name="Plant Cell">
        <title>Experimental analysis of the Arabidopsis mitochondrial proteome highlights signaling and regulatory components, provides assessment of targeting prediction programs, and indicates plant-specific mitochondrial proteins.</title>
        <authorList>
            <person name="Heazlewood J.L."/>
            <person name="Tonti-Filippini J.S."/>
            <person name="Gout A.M."/>
            <person name="Day D.A."/>
            <person name="Whelan J."/>
            <person name="Millar A.H."/>
        </authorList>
    </citation>
    <scope>IDENTIFICATION BY MASS SPECTROMETRY</scope>
    <scope>SUBCELLULAR LOCATION [LARGE SCALE ANALYSIS]</scope>
    <source>
        <strain>cv. Landsberg erecta</strain>
    </source>
</reference>
<accession>P83484</accession>
<accession>Q8RY05</accession>
<accession>Q8VX26</accession>
<accession>Q9C5A8</accession>
<accession>Q9C5B0</accession>
<sequence>MASRRVLSSLLRSSSGRSAAKLVNRNPRLPSPSPARHAAPCSYLLGRVAEYATSSPASSAAPSSAPAKDEGKKTYDYGGKGAIGRVCQVIGAIVDVRFEDQEGLPPIMTSLEVQDHPTRLVLEVSHHLGQNVVRTIAMDGTEGLVRGRKVLNTGAPITVPVGRATLGRIMNVLGEPIDERGEIKTEHYLPIHRDAPALVDLATGQEILATGIKVVDLLAPYQRGGKIGLFGGAGVGKTVLIMELINNVAKAHGGFSVFAGVGERTREGNDLYREMIESGVIKLGEKQSESKCALVYGQMNEPPGARARVGLTGLTVAEYFRDAEGQDVLLFIDNIFRFTQANSEVSALLGRIPSAVGYQPTLASDLGALQERITTTKKGSITSVQAIYVPADDLTDPAPATTFAHLDATTVLSRQISELGIYPAVDPLDSTSRMLSPHILGEEHYNTARGVQKVLQNYKNLQDIIAILGMDELSEDDKLTVARARKIQRFLSQPFHVAEIFTGAPGKYVDLKENINSFQGLLDGKYDDLSEQSFYMVGGIDEVVAKAEKIAKESAA</sequence>
<comment type="function">
    <text>Mitochondrial membrane ATP synthase (F(1)F(0) ATP synthase or Complex V) produces ATP from ADP in the presence of a proton gradient across the membrane which is generated by electron transport complexes of the respiratory chain. F-type ATPases consist of two structural domains, F(1) - containing the extramembraneous catalytic core, and F(0) - containing the membrane proton channel, linked together by a central stalk and a peripheral stalk. During catalysis, ATP synthesis in the catalytic domain of F(1) is coupled via a rotary mechanism of the central stalk subunits to proton translocation. Subunits alpha and beta form the catalytic core in F(1). Rotation of the central stalk against the surrounding alpha(3)beta(3) subunits leads to hydrolysis of ATP in three separate catalytic sites on the beta subunits.</text>
</comment>
<comment type="catalytic activity">
    <reaction evidence="3">
        <text>ATP + H2O + 4 H(+)(in) = ADP + phosphate + 5 H(+)(out)</text>
        <dbReference type="Rhea" id="RHEA:57720"/>
        <dbReference type="ChEBI" id="CHEBI:15377"/>
        <dbReference type="ChEBI" id="CHEBI:15378"/>
        <dbReference type="ChEBI" id="CHEBI:30616"/>
        <dbReference type="ChEBI" id="CHEBI:43474"/>
        <dbReference type="ChEBI" id="CHEBI:456216"/>
        <dbReference type="EC" id="7.1.2.2"/>
    </reaction>
</comment>
<comment type="subunit">
    <text evidence="1">F-type ATPases have 2 components, CF(1) - the catalytic core - and CF(0) - the membrane proton channel. CF(1) has five subunits: alpha(3), beta(3), gamma(1), delta(1), epsilon(1). CF(0) has three main subunits: a, b and c (By similarity).</text>
</comment>
<comment type="subcellular location">
    <subcellularLocation>
        <location evidence="5 6">Mitochondrion</location>
    </subcellularLocation>
    <subcellularLocation>
        <location evidence="7">Mitochondrion inner membrane</location>
    </subcellularLocation>
    <text evidence="7">Peripheral membrane protein.</text>
</comment>
<comment type="similarity">
    <text evidence="7">Belongs to the ATPase alpha/beta chains family.</text>
</comment>
<keyword id="KW-0066">ATP synthesis</keyword>
<keyword id="KW-0067">ATP-binding</keyword>
<keyword id="KW-0139">CF(1)</keyword>
<keyword id="KW-0903">Direct protein sequencing</keyword>
<keyword id="KW-0375">Hydrogen ion transport</keyword>
<keyword id="KW-0406">Ion transport</keyword>
<keyword id="KW-0472">Membrane</keyword>
<keyword id="KW-0496">Mitochondrion</keyword>
<keyword id="KW-0999">Mitochondrion inner membrane</keyword>
<keyword id="KW-0547">Nucleotide-binding</keyword>
<keyword id="KW-0597">Phosphoprotein</keyword>
<keyword id="KW-1185">Reference proteome</keyword>
<keyword id="KW-0809">Transit peptide</keyword>
<keyword id="KW-1278">Translocase</keyword>
<keyword id="KW-0813">Transport</keyword>
<feature type="transit peptide" description="Mitochondrion" evidence="5">
    <location>
        <begin position="1"/>
        <end position="51"/>
    </location>
</feature>
<feature type="chain" id="PRO_0000002435" description="ATP synthase subunit beta-2, mitochondrial">
    <location>
        <begin position="52"/>
        <end position="556"/>
    </location>
</feature>
<feature type="region of interest" description="Disordered" evidence="4">
    <location>
        <begin position="1"/>
        <end position="37"/>
    </location>
</feature>
<feature type="compositionally biased region" description="Low complexity" evidence="4">
    <location>
        <begin position="1"/>
        <end position="20"/>
    </location>
</feature>
<feature type="binding site" evidence="1">
    <location>
        <begin position="231"/>
        <end position="238"/>
    </location>
    <ligand>
        <name>ATP</name>
        <dbReference type="ChEBI" id="CHEBI:30616"/>
    </ligand>
</feature>
<feature type="modified residue" description="Phosphoserine" evidence="2">
    <location>
        <position position="59"/>
    </location>
</feature>
<name>ATPBN_ARATH</name>
<proteinExistence type="evidence at protein level"/>
<protein>
    <recommendedName>
        <fullName>ATP synthase subunit beta-2, mitochondrial</fullName>
        <ecNumber>7.1.2.2</ecNumber>
    </recommendedName>
</protein>
<evidence type="ECO:0000250" key="1"/>
<evidence type="ECO:0000250" key="2">
    <source>
        <dbReference type="UniProtKB" id="P19366"/>
    </source>
</evidence>
<evidence type="ECO:0000250" key="3">
    <source>
        <dbReference type="UniProtKB" id="P29685"/>
    </source>
</evidence>
<evidence type="ECO:0000256" key="4">
    <source>
        <dbReference type="SAM" id="MobiDB-lite"/>
    </source>
</evidence>
<evidence type="ECO:0000269" key="5">
    <source>
    </source>
</evidence>
<evidence type="ECO:0000269" key="6">
    <source>
    </source>
</evidence>
<evidence type="ECO:0000305" key="7"/>
<evidence type="ECO:0000312" key="8">
    <source>
        <dbReference type="EMBL" id="AAL85072.1"/>
    </source>
</evidence>
<evidence type="ECO:0000312" key="9">
    <source>
        <dbReference type="EMBL" id="CAC35874.1"/>
    </source>
</evidence>
<gene>
    <name type="ordered locus">At5g08690</name>
    <name type="ORF">T2K12.9</name>
</gene>